<gene>
    <name evidence="1" type="primary">murD</name>
    <name type="ordered locus">HP_0494</name>
</gene>
<evidence type="ECO:0000255" key="1">
    <source>
        <dbReference type="HAMAP-Rule" id="MF_00639"/>
    </source>
</evidence>
<organism>
    <name type="scientific">Helicobacter pylori (strain ATCC 700392 / 26695)</name>
    <name type="common">Campylobacter pylori</name>
    <dbReference type="NCBI Taxonomy" id="85962"/>
    <lineage>
        <taxon>Bacteria</taxon>
        <taxon>Pseudomonadati</taxon>
        <taxon>Campylobacterota</taxon>
        <taxon>Epsilonproteobacteria</taxon>
        <taxon>Campylobacterales</taxon>
        <taxon>Helicobacteraceae</taxon>
        <taxon>Helicobacter</taxon>
    </lineage>
</organism>
<comment type="function">
    <text evidence="1">Cell wall formation. Catalyzes the addition of glutamate to the nucleotide precursor UDP-N-acetylmuramoyl-L-alanine (UMA).</text>
</comment>
<comment type="catalytic activity">
    <reaction evidence="1">
        <text>UDP-N-acetyl-alpha-D-muramoyl-L-alanine + D-glutamate + ATP = UDP-N-acetyl-alpha-D-muramoyl-L-alanyl-D-glutamate + ADP + phosphate + H(+)</text>
        <dbReference type="Rhea" id="RHEA:16429"/>
        <dbReference type="ChEBI" id="CHEBI:15378"/>
        <dbReference type="ChEBI" id="CHEBI:29986"/>
        <dbReference type="ChEBI" id="CHEBI:30616"/>
        <dbReference type="ChEBI" id="CHEBI:43474"/>
        <dbReference type="ChEBI" id="CHEBI:83898"/>
        <dbReference type="ChEBI" id="CHEBI:83900"/>
        <dbReference type="ChEBI" id="CHEBI:456216"/>
        <dbReference type="EC" id="6.3.2.9"/>
    </reaction>
</comment>
<comment type="pathway">
    <text evidence="1">Cell wall biogenesis; peptidoglycan biosynthesis.</text>
</comment>
<comment type="subcellular location">
    <subcellularLocation>
        <location evidence="1">Cytoplasm</location>
    </subcellularLocation>
</comment>
<comment type="similarity">
    <text evidence="1">Belongs to the MurCDEF family.</text>
</comment>
<name>MURD_HELPY</name>
<accession>O25236</accession>
<protein>
    <recommendedName>
        <fullName evidence="1">UDP-N-acetylmuramoylalanine--D-glutamate ligase</fullName>
        <ecNumber evidence="1">6.3.2.9</ecNumber>
    </recommendedName>
    <alternativeName>
        <fullName evidence="1">D-glutamic acid-adding enzyme</fullName>
    </alternativeName>
    <alternativeName>
        <fullName evidence="1">UDP-N-acetylmuramoyl-L-alanyl-D-glutamate synthetase</fullName>
    </alternativeName>
</protein>
<sequence>MKISLLGHGKTTLALGRFFKKNHNEVKFFDDKFLSSFKDSEGFLCYPSKDFNPNDSQLEIVSPGISFTHPLVIKAKHLVSEYDYINSLFDLVFTPTIISISGTNGKTTTTEMLTMLLEDFKAVSGGNIGTPLIELFEKRSPLWVLETSSFSLHYTNKAYPLIYLLINIEADHLTWHCNFENYLNAKLKVLTLMPKTSLAILPLKFKEHPIIQNSQAQKIFFDKSEEVLERLKIPSNALFFKGAFLLDAALALLVYEQFLKIKNLKWQDYRENALKRLNAFKIGSHKMEEFRDKQGRLWVDDSKATNIDATLQALKTFKNQKIHLILGGDIKGVNLTPLFEEFKNYKISLYAIGSSAFIIQALALEFNVSCQVCLELEKAVQEIKSVLSQNEIALLSPSAASLDQFSSYKERGEKFKAFVLKD</sequence>
<reference key="1">
    <citation type="journal article" date="1997" name="Nature">
        <title>The complete genome sequence of the gastric pathogen Helicobacter pylori.</title>
        <authorList>
            <person name="Tomb J.-F."/>
            <person name="White O."/>
            <person name="Kerlavage A.R."/>
            <person name="Clayton R.A."/>
            <person name="Sutton G.G."/>
            <person name="Fleischmann R.D."/>
            <person name="Ketchum K.A."/>
            <person name="Klenk H.-P."/>
            <person name="Gill S.R."/>
            <person name="Dougherty B.A."/>
            <person name="Nelson K.E."/>
            <person name="Quackenbush J."/>
            <person name="Zhou L."/>
            <person name="Kirkness E.F."/>
            <person name="Peterson S.N."/>
            <person name="Loftus B.J."/>
            <person name="Richardson D.L."/>
            <person name="Dodson R.J."/>
            <person name="Khalak H.G."/>
            <person name="Glodek A."/>
            <person name="McKenney K."/>
            <person name="FitzGerald L.M."/>
            <person name="Lee N."/>
            <person name="Adams M.D."/>
            <person name="Hickey E.K."/>
            <person name="Berg D.E."/>
            <person name="Gocayne J.D."/>
            <person name="Utterback T.R."/>
            <person name="Peterson J.D."/>
            <person name="Kelley J.M."/>
            <person name="Cotton M.D."/>
            <person name="Weidman J.F."/>
            <person name="Fujii C."/>
            <person name="Bowman C."/>
            <person name="Watthey L."/>
            <person name="Wallin E."/>
            <person name="Hayes W.S."/>
            <person name="Borodovsky M."/>
            <person name="Karp P.D."/>
            <person name="Smith H.O."/>
            <person name="Fraser C.M."/>
            <person name="Venter J.C."/>
        </authorList>
    </citation>
    <scope>NUCLEOTIDE SEQUENCE [LARGE SCALE GENOMIC DNA]</scope>
    <source>
        <strain>ATCC 700392 / 26695</strain>
    </source>
</reference>
<keyword id="KW-0067">ATP-binding</keyword>
<keyword id="KW-0131">Cell cycle</keyword>
<keyword id="KW-0132">Cell division</keyword>
<keyword id="KW-0133">Cell shape</keyword>
<keyword id="KW-0961">Cell wall biogenesis/degradation</keyword>
<keyword id="KW-0963">Cytoplasm</keyword>
<keyword id="KW-0436">Ligase</keyword>
<keyword id="KW-0547">Nucleotide-binding</keyword>
<keyword id="KW-0573">Peptidoglycan synthesis</keyword>
<keyword id="KW-1185">Reference proteome</keyword>
<feature type="chain" id="PRO_0000109025" description="UDP-N-acetylmuramoylalanine--D-glutamate ligase">
    <location>
        <begin position="1"/>
        <end position="422"/>
    </location>
</feature>
<feature type="binding site" evidence="1">
    <location>
        <begin position="102"/>
        <end position="108"/>
    </location>
    <ligand>
        <name>ATP</name>
        <dbReference type="ChEBI" id="CHEBI:30616"/>
    </ligand>
</feature>
<proteinExistence type="inferred from homology"/>
<dbReference type="EC" id="6.3.2.9" evidence="1"/>
<dbReference type="EMBL" id="AE000511">
    <property type="protein sequence ID" value="AAD07560.1"/>
    <property type="molecule type" value="Genomic_DNA"/>
</dbReference>
<dbReference type="PIR" id="F64581">
    <property type="entry name" value="F64581"/>
</dbReference>
<dbReference type="RefSeq" id="NP_207291.1">
    <property type="nucleotide sequence ID" value="NC_000915.1"/>
</dbReference>
<dbReference type="RefSeq" id="WP_000703484.1">
    <property type="nucleotide sequence ID" value="NC_018939.1"/>
</dbReference>
<dbReference type="SMR" id="O25236"/>
<dbReference type="DIP" id="DIP-3766N"/>
<dbReference type="FunCoup" id="O25236">
    <property type="interactions" value="346"/>
</dbReference>
<dbReference type="IntAct" id="O25236">
    <property type="interactions" value="2"/>
</dbReference>
<dbReference type="MINT" id="O25236"/>
<dbReference type="STRING" id="85962.HP_0494"/>
<dbReference type="PaxDb" id="85962-C694_02540"/>
<dbReference type="EnsemblBacteria" id="AAD07560">
    <property type="protein sequence ID" value="AAD07560"/>
    <property type="gene ID" value="HP_0494"/>
</dbReference>
<dbReference type="KEGG" id="heo:C694_02540"/>
<dbReference type="KEGG" id="hpy:HP_0494"/>
<dbReference type="PATRIC" id="fig|85962.47.peg.532"/>
<dbReference type="eggNOG" id="COG0771">
    <property type="taxonomic scope" value="Bacteria"/>
</dbReference>
<dbReference type="InParanoid" id="O25236"/>
<dbReference type="OrthoDB" id="9809796at2"/>
<dbReference type="PhylomeDB" id="O25236"/>
<dbReference type="UniPathway" id="UPA00219"/>
<dbReference type="Proteomes" id="UP000000429">
    <property type="component" value="Chromosome"/>
</dbReference>
<dbReference type="GO" id="GO:0005737">
    <property type="term" value="C:cytoplasm"/>
    <property type="evidence" value="ECO:0007669"/>
    <property type="project" value="UniProtKB-SubCell"/>
</dbReference>
<dbReference type="GO" id="GO:0005524">
    <property type="term" value="F:ATP binding"/>
    <property type="evidence" value="ECO:0007669"/>
    <property type="project" value="UniProtKB-UniRule"/>
</dbReference>
<dbReference type="GO" id="GO:0004326">
    <property type="term" value="F:tetrahydrofolylpolyglutamate synthase activity"/>
    <property type="evidence" value="ECO:0007669"/>
    <property type="project" value="InterPro"/>
</dbReference>
<dbReference type="GO" id="GO:0008764">
    <property type="term" value="F:UDP-N-acetylmuramoylalanine-D-glutamate ligase activity"/>
    <property type="evidence" value="ECO:0007669"/>
    <property type="project" value="UniProtKB-UniRule"/>
</dbReference>
<dbReference type="GO" id="GO:0051301">
    <property type="term" value="P:cell division"/>
    <property type="evidence" value="ECO:0007669"/>
    <property type="project" value="UniProtKB-KW"/>
</dbReference>
<dbReference type="GO" id="GO:0071555">
    <property type="term" value="P:cell wall organization"/>
    <property type="evidence" value="ECO:0007669"/>
    <property type="project" value="UniProtKB-KW"/>
</dbReference>
<dbReference type="GO" id="GO:0009252">
    <property type="term" value="P:peptidoglycan biosynthetic process"/>
    <property type="evidence" value="ECO:0007669"/>
    <property type="project" value="UniProtKB-UniRule"/>
</dbReference>
<dbReference type="GO" id="GO:0008360">
    <property type="term" value="P:regulation of cell shape"/>
    <property type="evidence" value="ECO:0007669"/>
    <property type="project" value="UniProtKB-KW"/>
</dbReference>
<dbReference type="Gene3D" id="3.90.190.20">
    <property type="entry name" value="Mur ligase, C-terminal domain"/>
    <property type="match status" value="1"/>
</dbReference>
<dbReference type="Gene3D" id="3.40.1190.10">
    <property type="entry name" value="Mur-like, catalytic domain"/>
    <property type="match status" value="1"/>
</dbReference>
<dbReference type="HAMAP" id="MF_00639">
    <property type="entry name" value="MurD"/>
    <property type="match status" value="1"/>
</dbReference>
<dbReference type="InterPro" id="IPR018109">
    <property type="entry name" value="Folylpolyglutamate_synth_CS"/>
</dbReference>
<dbReference type="InterPro" id="IPR036565">
    <property type="entry name" value="Mur-like_cat_sf"/>
</dbReference>
<dbReference type="InterPro" id="IPR036615">
    <property type="entry name" value="Mur_ligase_C_dom_sf"/>
</dbReference>
<dbReference type="InterPro" id="IPR013221">
    <property type="entry name" value="Mur_ligase_cen"/>
</dbReference>
<dbReference type="InterPro" id="IPR005762">
    <property type="entry name" value="MurD"/>
</dbReference>
<dbReference type="NCBIfam" id="TIGR01087">
    <property type="entry name" value="murD"/>
    <property type="match status" value="1"/>
</dbReference>
<dbReference type="PANTHER" id="PTHR43692">
    <property type="entry name" value="UDP-N-ACETYLMURAMOYLALANINE--D-GLUTAMATE LIGASE"/>
    <property type="match status" value="1"/>
</dbReference>
<dbReference type="PANTHER" id="PTHR43692:SF1">
    <property type="entry name" value="UDP-N-ACETYLMURAMOYLALANINE--D-GLUTAMATE LIGASE"/>
    <property type="match status" value="1"/>
</dbReference>
<dbReference type="Pfam" id="PF08245">
    <property type="entry name" value="Mur_ligase_M"/>
    <property type="match status" value="1"/>
</dbReference>
<dbReference type="SUPFAM" id="SSF53623">
    <property type="entry name" value="MurD-like peptide ligases, catalytic domain"/>
    <property type="match status" value="1"/>
</dbReference>
<dbReference type="SUPFAM" id="SSF53244">
    <property type="entry name" value="MurD-like peptide ligases, peptide-binding domain"/>
    <property type="match status" value="1"/>
</dbReference>